<gene>
    <name evidence="12" type="primary">CACNB4</name>
    <name type="synonym">CACNLB4</name>
</gene>
<feature type="chain" id="PRO_0000144060" description="Voltage-dependent L-type calcium channel subunit beta-4">
    <location>
        <begin position="1"/>
        <end position="520"/>
    </location>
</feature>
<feature type="domain" description="SH3" evidence="3">
    <location>
        <begin position="92"/>
        <end position="161"/>
    </location>
</feature>
<feature type="region of interest" description="Disordered" evidence="4">
    <location>
        <begin position="1"/>
        <end position="71"/>
    </location>
</feature>
<feature type="region of interest" description="Disordered" evidence="4">
    <location>
        <begin position="166"/>
        <end position="185"/>
    </location>
</feature>
<feature type="region of interest" description="Disordered" evidence="4">
    <location>
        <begin position="425"/>
        <end position="520"/>
    </location>
</feature>
<feature type="compositionally biased region" description="Polar residues" evidence="4">
    <location>
        <begin position="17"/>
        <end position="26"/>
    </location>
</feature>
<feature type="compositionally biased region" description="Polar residues" evidence="4">
    <location>
        <begin position="38"/>
        <end position="63"/>
    </location>
</feature>
<feature type="compositionally biased region" description="Basic and acidic residues" evidence="4">
    <location>
        <begin position="449"/>
        <end position="467"/>
    </location>
</feature>
<feature type="modified residue" description="Phosphoserine" evidence="1">
    <location>
        <position position="39"/>
    </location>
</feature>
<feature type="modified residue" description="Phosphoserine" evidence="2">
    <location>
        <position position="183"/>
    </location>
</feature>
<feature type="modified residue" description="Phosphothreonine" evidence="2">
    <location>
        <position position="411"/>
    </location>
</feature>
<feature type="modified residue" description="Phosphoserine" evidence="1">
    <location>
        <position position="448"/>
    </location>
</feature>
<feature type="modified residue" description="Omega-N-methylarginine" evidence="2">
    <location>
        <position position="506"/>
    </location>
</feature>
<feature type="modified residue" description="Phosphoserine" evidence="1">
    <location>
        <position position="508"/>
    </location>
</feature>
<feature type="splice variant" id="VSP_000635" description="In isoform 2." evidence="8 9">
    <original>MSSSSYAKNGTADGPHSPTSQVARGTTTRRSRLKRSDGSTTSTSFILRQ</original>
    <variation>MYDNLYLHGIEDSEA</variation>
    <location>
        <begin position="1"/>
        <end position="49"/>
    </location>
</feature>
<feature type="splice variant" id="VSP_043192" description="In isoform 3." evidence="9">
    <original>MSSSSYAKNGTADGPHSPTSQ</original>
    <variation>MDV</variation>
    <location>
        <begin position="1"/>
        <end position="21"/>
    </location>
</feature>
<feature type="splice variant" id="VSP_043193" description="In isoform 4." evidence="10">
    <location>
        <begin position="373"/>
        <end position="434"/>
    </location>
</feature>
<feature type="sequence variant" id="VAR_013669" description="In EA5; risk factor for EIG9; dbSNP:rs1805031." evidence="5">
    <original>C</original>
    <variation>F</variation>
    <location>
        <position position="104"/>
    </location>
</feature>
<feature type="sequence conflict" description="In Ref. 1; AAB53333 and 2; AAL14351." evidence="11" ref="1 2">
    <original>F</original>
    <variation>S</variation>
    <location>
        <position position="245"/>
    </location>
</feature>
<feature type="sequence conflict" description="In Ref. 2; AAL14351." evidence="11" ref="2">
    <original>L</original>
    <variation>V</variation>
    <location>
        <position position="311"/>
    </location>
</feature>
<feature type="sequence conflict" description="In Ref. 2; AAL14351." evidence="11" ref="2">
    <original>S</original>
    <variation>T</variation>
    <location>
        <position position="441"/>
    </location>
</feature>
<feature type="strand" evidence="13">
    <location>
        <begin position="51"/>
        <end position="54"/>
    </location>
</feature>
<feature type="strand" evidence="13">
    <location>
        <begin position="57"/>
        <end position="59"/>
    </location>
</feature>
<feature type="helix" evidence="13">
    <location>
        <begin position="66"/>
        <end position="68"/>
    </location>
</feature>
<feature type="turn" evidence="13">
    <location>
        <begin position="71"/>
        <end position="73"/>
    </location>
</feature>
<feature type="helix" evidence="13">
    <location>
        <begin position="74"/>
        <end position="88"/>
    </location>
</feature>
<feature type="sequence conflict" description="In Ref. 2; AAL14351." evidence="11" ref="2">
    <original>D</original>
    <variation>N</variation>
    <location sequence="O00305-2">
        <position position="12"/>
    </location>
</feature>
<sequence length="520" mass="58169">MSSSSYAKNGTADGPHSPTSQVARGTTTRRSRLKRSDGSTTSTSFILRQGSADSYTSRPSDSDVSLEEDREAIRQEREQQAAIQLERAKSKPVAFAVKTNVSYCGALDEDVPVPSTAISFDAKDFLHIKEKYNNDWWIGRLVKEGCEIGFIPSPLRLENIRIQQEQKRGRFHGGKSSGNSSSSLGEMVSGTFRATPTSTAKQKQKVTEHIPPYDVVPSMRPVVLVGPSLKGYEVTDMMQKALFDFLKHRFDGRISITRVTADISLAKRSVLNNPSKRAIIERSNTRSSLAEVQSEIERIFELARSLQLVVLDADTINHPAQLIKTSLAPIIVHVKVSSPKVLQRLIKSRGKSQSKHLNVQLVAADKLAQCPPEMFDVILDENQLEDACEHLGEYLEAYWRATHTTSSTPMTPLLGRNLGSTALSPYPTAISGLQSQRMRHSNHSTENSPIERRSLMTSDENYHNERARKSRNRLSSSSQHSRDHYPLVEEDYPDSYQDTYKPHRNRGSPGGYSHDSRHRL</sequence>
<comment type="function">
    <text evidence="6">The beta subunit of voltage-dependent calcium channels contributes to the function of the calcium channel by increasing peak calcium current, shifting the voltage dependencies of activation and inactivation, modulating G protein inhibition and controlling the alpha-1 subunit membrane targeting.</text>
</comment>
<comment type="subunit">
    <text evidence="2 6 7">The L-type calcium channel is composed of four subunits: alpha-1, alpha-2, beta and gamma (PubMed:11880487). Interacts with FASLG (PubMed:19807924). Interacts with CBARP (By similarity).</text>
</comment>
<comment type="interaction">
    <interactant intactId="EBI-714838">
        <id>O00305</id>
    </interactant>
    <interactant intactId="EBI-10171570">
        <id>Q68D86</id>
        <label>CCDC102B</label>
    </interactant>
    <organismsDiffer>false</organismsDiffer>
    <experiments>3</experiments>
</comment>
<comment type="interaction">
    <interactant intactId="EBI-714838">
        <id>O00305</id>
    </interactant>
    <interactant intactId="EBI-10171902">
        <id>P56545-3</id>
        <label>CTBP2</label>
    </interactant>
    <organismsDiffer>false</organismsDiffer>
    <experiments>3</experiments>
</comment>
<comment type="interaction">
    <interactant intactId="EBI-714838">
        <id>O00305</id>
    </interactant>
    <interactant intactId="EBI-2349927">
        <id>Q5JST6</id>
        <label>EFHC2</label>
    </interactant>
    <organismsDiffer>false</organismsDiffer>
    <experiments>6</experiments>
</comment>
<comment type="interaction">
    <interactant intactId="EBI-714855">
        <id>O00305-2</id>
    </interactant>
    <interactant intactId="EBI-524909">
        <id>P21579</id>
        <label>SYT1</label>
    </interactant>
    <organismsDiffer>false</organismsDiffer>
    <experiments>2</experiments>
</comment>
<comment type="alternative products">
    <event type="alternative splicing"/>
    <isoform>
        <id>O00305-1</id>
        <name>1</name>
        <name>4b</name>
        <sequence type="displayed"/>
    </isoform>
    <isoform>
        <id>O00305-2</id>
        <name>2</name>
        <name>4a</name>
        <sequence type="described" ref="VSP_000635"/>
    </isoform>
    <isoform>
        <id>O00305-3</id>
        <name>3</name>
        <sequence type="described" ref="VSP_043192"/>
    </isoform>
    <isoform>
        <id>O00305-4</id>
        <name>4</name>
        <name>4d</name>
        <sequence type="described" ref="VSP_043193"/>
    </isoform>
</comment>
<comment type="tissue specificity">
    <text>Expressed predominantly in the cerebellum and kidney.</text>
</comment>
<comment type="disease" evidence="5">
    <disease id="DI-00593">
        <name>Epilepsy, idiopathic generalized 9</name>
        <acronym>EIG9</acronym>
        <description>A disorder characterized by recurring generalized seizures in the absence of detectable brain lesions and/or metabolic abnormalities. Generalized seizures arise diffusely and simultaneously from both hemispheres of the brain.</description>
        <dbReference type="MIM" id="607682"/>
    </disease>
    <text>Disease susceptibility is associated with variants affecting the gene represented in this entry.</text>
</comment>
<comment type="disease" evidence="5">
    <disease id="DI-00614">
        <name>Juvenile myoclonic epilepsy 6</name>
        <acronym>EJM6</acronym>
        <description>A subtype of idiopathic generalized epilepsy. Patients have afebrile seizures only, with onset in adolescence (rather than in childhood) and myoclonic jerks which usually occur after awakening and are triggered by sleep deprivation and fatigue.</description>
        <dbReference type="MIM" id="607682"/>
    </disease>
    <text>Disease susceptibility is associated with variants affecting the gene represented in this entry.</text>
</comment>
<comment type="disease" evidence="5">
    <disease id="DI-03073">
        <name>Episodic ataxia 5</name>
        <acronym>EA5</acronym>
        <description>A disorder characterized by episodes of vertigo and ataxia that last for several hours. Interictal examination show spontaneous downbeat and gaze-evoked nystagmus, mild dysarthria and truncal ataxia.</description>
        <dbReference type="MIM" id="613855"/>
    </disease>
    <text>The disease is caused by variants affecting the gene represented in this entry.</text>
</comment>
<comment type="miscellaneous">
    <molecule>Isoform 4</molecule>
    <text evidence="11">Unable to interact with the alpha-1 subunit.</text>
</comment>
<comment type="similarity">
    <text evidence="11">Belongs to the calcium channel beta subunit family.</text>
</comment>
<name>CACB4_HUMAN</name>
<keyword id="KW-0002">3D-structure</keyword>
<keyword id="KW-0025">Alternative splicing</keyword>
<keyword id="KW-0106">Calcium</keyword>
<keyword id="KW-0107">Calcium channel</keyword>
<keyword id="KW-0109">Calcium transport</keyword>
<keyword id="KW-0225">Disease variant</keyword>
<keyword id="KW-0887">Epilepsy</keyword>
<keyword id="KW-0407">Ion channel</keyword>
<keyword id="KW-0406">Ion transport</keyword>
<keyword id="KW-0488">Methylation</keyword>
<keyword id="KW-0597">Phosphoprotein</keyword>
<keyword id="KW-1267">Proteomics identification</keyword>
<keyword id="KW-1185">Reference proteome</keyword>
<keyword id="KW-0728">SH3 domain</keyword>
<keyword id="KW-0813">Transport</keyword>
<keyword id="KW-0851">Voltage-gated channel</keyword>
<dbReference type="EMBL" id="U95020">
    <property type="protein sequence ID" value="AAB53333.1"/>
    <property type="molecule type" value="mRNA"/>
</dbReference>
<dbReference type="EMBL" id="AY054985">
    <property type="protein sequence ID" value="AAL14351.1"/>
    <property type="molecule type" value="mRNA"/>
</dbReference>
<dbReference type="EMBL" id="AB302276">
    <property type="protein sequence ID" value="BAF73808.1"/>
    <property type="molecule type" value="mRNA"/>
</dbReference>
<dbReference type="EMBL" id="AK290049">
    <property type="protein sequence ID" value="BAF82738.1"/>
    <property type="molecule type" value="mRNA"/>
</dbReference>
<dbReference type="EMBL" id="AK294398">
    <property type="protein sequence ID" value="BAG57651.1"/>
    <property type="molecule type" value="mRNA"/>
</dbReference>
<dbReference type="EMBL" id="AK316045">
    <property type="protein sequence ID" value="BAH14416.1"/>
    <property type="molecule type" value="mRNA"/>
</dbReference>
<dbReference type="EMBL" id="AC068547">
    <property type="status" value="NOT_ANNOTATED_CDS"/>
    <property type="molecule type" value="Genomic_DNA"/>
</dbReference>
<dbReference type="EMBL" id="AC079790">
    <property type="status" value="NOT_ANNOTATED_CDS"/>
    <property type="molecule type" value="Genomic_DNA"/>
</dbReference>
<dbReference type="EMBL" id="AC097448">
    <property type="status" value="NOT_ANNOTATED_CDS"/>
    <property type="molecule type" value="Genomic_DNA"/>
</dbReference>
<dbReference type="EMBL" id="CH471058">
    <property type="protein sequence ID" value="EAX11494.1"/>
    <property type="molecule type" value="Genomic_DNA"/>
</dbReference>
<dbReference type="EMBL" id="BC075049">
    <property type="protein sequence ID" value="AAH75049.1"/>
    <property type="molecule type" value="mRNA"/>
</dbReference>
<dbReference type="EMBL" id="AF038852">
    <property type="protein sequence ID" value="AAC24206.1"/>
    <property type="molecule type" value="mRNA"/>
</dbReference>
<dbReference type="CCDS" id="CCDS46426.1">
    <molecule id="O00305-1"/>
</dbReference>
<dbReference type="CCDS" id="CCDS46427.1">
    <molecule id="O00305-3"/>
</dbReference>
<dbReference type="CCDS" id="CCDS46428.1">
    <molecule id="O00305-2"/>
</dbReference>
<dbReference type="CCDS" id="CCDS54409.1">
    <molecule id="O00305-4"/>
</dbReference>
<dbReference type="RefSeq" id="NP_000717.2">
    <molecule id="O00305-1"/>
    <property type="nucleotide sequence ID" value="NM_000726.5"/>
</dbReference>
<dbReference type="RefSeq" id="NP_001005746.1">
    <molecule id="O00305-3"/>
    <property type="nucleotide sequence ID" value="NM_001005746.4"/>
</dbReference>
<dbReference type="RefSeq" id="NP_001005747.1">
    <molecule id="O00305-2"/>
    <property type="nucleotide sequence ID" value="NM_001005747.4"/>
</dbReference>
<dbReference type="RefSeq" id="NP_001139270.1">
    <molecule id="O00305-4"/>
    <property type="nucleotide sequence ID" value="NM_001145798.2"/>
</dbReference>
<dbReference type="RefSeq" id="NP_001307651.1">
    <property type="nucleotide sequence ID" value="NM_001320722.2"/>
</dbReference>
<dbReference type="RefSeq" id="XP_054199797.1">
    <molecule id="O00305-1"/>
    <property type="nucleotide sequence ID" value="XM_054343822.1"/>
</dbReference>
<dbReference type="PDB" id="2D46">
    <property type="method" value="NMR"/>
    <property type="chains" value="A=50-92"/>
</dbReference>
<dbReference type="PDBsum" id="2D46"/>
<dbReference type="SMR" id="O00305"/>
<dbReference type="BioGRID" id="107239">
    <property type="interactions" value="15"/>
</dbReference>
<dbReference type="ComplexPortal" id="CPX-8726">
    <property type="entry name" value="Cav1.1 voltage-gated calcium channel complex, CACNA2D1-CACNB4-CACNG1 variant"/>
</dbReference>
<dbReference type="ComplexPortal" id="CPX-8743">
    <property type="entry name" value="Cav1.1 voltage-gated calcium channel complex, CACNA2D2-CACNB4-CACNG1 variant"/>
</dbReference>
<dbReference type="ComplexPortal" id="CPX-8768">
    <property type="entry name" value="Cav1.1 voltage-gated calcium channel complex, CACNA2D3-CACNB4-CACNG1 variant"/>
</dbReference>
<dbReference type="ComplexPortal" id="CPX-8773">
    <property type="entry name" value="Cav1.1 voltage-gated calcium channel complex, CACNA2D4-CACNB4-CACNG1 variant"/>
</dbReference>
<dbReference type="ComplexPortal" id="CPX-8863">
    <property type="entry name" value="Cav1.2 voltage-gated calcium channel complex, CACNA2D1-CACNB4 variant"/>
</dbReference>
<dbReference type="ComplexPortal" id="CPX-8867">
    <property type="entry name" value="Cav1.2 voltage-gated calcium channel complex, CACNA2D2-CACNB4 variant"/>
</dbReference>
<dbReference type="ComplexPortal" id="CPX-8871">
    <property type="entry name" value="Cav1.2 voltage-gated calcium channel complex, CACNA2D3-CACNB4 variant"/>
</dbReference>
<dbReference type="ComplexPortal" id="CPX-8876">
    <property type="entry name" value="Cav1.2 voltage-gated calcium channel complex, CACNA2D4-CACNB4 variant"/>
</dbReference>
<dbReference type="FunCoup" id="O00305">
    <property type="interactions" value="1570"/>
</dbReference>
<dbReference type="IntAct" id="O00305">
    <property type="interactions" value="14"/>
</dbReference>
<dbReference type="STRING" id="9606.ENSP00000438949"/>
<dbReference type="ChEMBL" id="CHEMBL2363032"/>
<dbReference type="DrugBank" id="DB01118">
    <property type="generic name" value="Amiodarone"/>
</dbReference>
<dbReference type="DrugBank" id="DB09231">
    <property type="generic name" value="Benidipine"/>
</dbReference>
<dbReference type="DrugBank" id="DB13746">
    <property type="generic name" value="Bioallethrin"/>
</dbReference>
<dbReference type="DrugBank" id="DB11148">
    <property type="generic name" value="Butamben"/>
</dbReference>
<dbReference type="DrugBank" id="DB11093">
    <property type="generic name" value="Calcium citrate"/>
</dbReference>
<dbReference type="DrugBank" id="DB11348">
    <property type="generic name" value="Calcium Phosphate"/>
</dbReference>
<dbReference type="DrugBank" id="DB14481">
    <property type="generic name" value="Calcium phosphate dihydrate"/>
</dbReference>
<dbReference type="DrugBank" id="DB09232">
    <property type="generic name" value="Cilnidipine"/>
</dbReference>
<dbReference type="DrugBank" id="DB04855">
    <property type="generic name" value="Dronedarone"/>
</dbReference>
<dbReference type="DrugBank" id="DB06751">
    <property type="generic name" value="Drotaverine"/>
</dbReference>
<dbReference type="DrugBank" id="DB09235">
    <property type="generic name" value="Efonidipine"/>
</dbReference>
<dbReference type="DrugBank" id="DB00228">
    <property type="generic name" value="Enflurane"/>
</dbReference>
<dbReference type="DrugBank" id="DB00153">
    <property type="generic name" value="Ergocalciferol"/>
</dbReference>
<dbReference type="DrugBank" id="DB13961">
    <property type="generic name" value="Fish oil"/>
</dbReference>
<dbReference type="DrugBank" id="DB09236">
    <property type="generic name" value="Lacidipine"/>
</dbReference>
<dbReference type="DrugBank" id="DB00825">
    <property type="generic name" value="Levomenthol"/>
</dbReference>
<dbReference type="DrugBank" id="DB00653">
    <property type="generic name" value="Magnesium sulfate"/>
</dbReference>
<dbReference type="DrugBank" id="DB09238">
    <property type="generic name" value="Manidipine"/>
</dbReference>
<dbReference type="DrugBank" id="DB01388">
    <property type="generic name" value="Mibefradil"/>
</dbReference>
<dbReference type="DrugBank" id="DB01110">
    <property type="generic name" value="Miconazole"/>
</dbReference>
<dbReference type="DrugBank" id="DB00622">
    <property type="generic name" value="Nicardipine"/>
</dbReference>
<dbReference type="DrugBank" id="DB06712">
    <property type="generic name" value="Nilvadipine"/>
</dbReference>
<dbReference type="DrugBank" id="DB00393">
    <property type="generic name" value="Nimodipine"/>
</dbReference>
<dbReference type="DrugBank" id="DB01054">
    <property type="generic name" value="Nitrendipine"/>
</dbReference>
<dbReference type="DrugBank" id="DB00252">
    <property type="generic name" value="Phenytoin"/>
</dbReference>
<dbReference type="DrugBank" id="DB00243">
    <property type="generic name" value="Ranolazine"/>
</dbReference>
<dbReference type="DrugBank" id="DB00421">
    <property type="generic name" value="Spironolactone"/>
</dbReference>
<dbReference type="DrugBank" id="DB00273">
    <property type="generic name" value="Topiramate"/>
</dbReference>
<dbReference type="DrugBank" id="DB09089">
    <property type="generic name" value="Trimebutine"/>
</dbReference>
<dbReference type="DrugBank" id="DB00661">
    <property type="generic name" value="Verapamil"/>
</dbReference>
<dbReference type="TCDB" id="8.A.22.1.4">
    <property type="family name" value="the ca(2+) channel auxiliary subunit Beta types 1-4 (cca-Beta) family"/>
</dbReference>
<dbReference type="GlyGen" id="O00305">
    <property type="glycosylation" value="1 site, 1 O-linked glycan (1 site)"/>
</dbReference>
<dbReference type="iPTMnet" id="O00305"/>
<dbReference type="PhosphoSitePlus" id="O00305"/>
<dbReference type="BioMuta" id="CACNB4"/>
<dbReference type="jPOST" id="O00305"/>
<dbReference type="MassIVE" id="O00305"/>
<dbReference type="PaxDb" id="9606-ENSP00000438949"/>
<dbReference type="PeptideAtlas" id="O00305"/>
<dbReference type="ProteomicsDB" id="47831">
    <molecule id="O00305-1"/>
</dbReference>
<dbReference type="ProteomicsDB" id="47832">
    <molecule id="O00305-2"/>
</dbReference>
<dbReference type="ProteomicsDB" id="47833">
    <molecule id="O00305-3"/>
</dbReference>
<dbReference type="ProteomicsDB" id="47834">
    <molecule id="O00305-4"/>
</dbReference>
<dbReference type="ABCD" id="O00305">
    <property type="antibodies" value="1 sequenced antibody"/>
</dbReference>
<dbReference type="Antibodypedia" id="2810">
    <property type="antibodies" value="335 antibodies from 38 providers"/>
</dbReference>
<dbReference type="DNASU" id="785"/>
<dbReference type="Ensembl" id="ENST00000201943.10">
    <molecule id="O00305-4"/>
    <property type="protein sequence ID" value="ENSP00000201943.5"/>
    <property type="gene ID" value="ENSG00000182389.20"/>
</dbReference>
<dbReference type="Ensembl" id="ENST00000534999.7">
    <molecule id="O00305-2"/>
    <property type="protein sequence ID" value="ENSP00000443893.1"/>
    <property type="gene ID" value="ENSG00000182389.20"/>
</dbReference>
<dbReference type="Ensembl" id="ENST00000539935.7">
    <molecule id="O00305-1"/>
    <property type="protein sequence ID" value="ENSP00000438949.1"/>
    <property type="gene ID" value="ENSG00000182389.20"/>
</dbReference>
<dbReference type="Ensembl" id="ENST00000638005.1">
    <molecule id="O00305-3"/>
    <property type="protein sequence ID" value="ENSP00000489677.1"/>
    <property type="gene ID" value="ENSG00000182389.20"/>
</dbReference>
<dbReference type="GeneID" id="785"/>
<dbReference type="KEGG" id="hsa:785"/>
<dbReference type="MANE-Select" id="ENST00000539935.7">
    <property type="protein sequence ID" value="ENSP00000438949.1"/>
    <property type="RefSeq nucleotide sequence ID" value="NM_000726.5"/>
    <property type="RefSeq protein sequence ID" value="NP_000717.2"/>
</dbReference>
<dbReference type="UCSC" id="uc002txy.5">
    <molecule id="O00305-1"/>
    <property type="organism name" value="human"/>
</dbReference>
<dbReference type="AGR" id="HGNC:1404"/>
<dbReference type="CTD" id="785"/>
<dbReference type="DisGeNET" id="785"/>
<dbReference type="GeneCards" id="CACNB4"/>
<dbReference type="HGNC" id="HGNC:1404">
    <property type="gene designation" value="CACNB4"/>
</dbReference>
<dbReference type="HPA" id="ENSG00000182389">
    <property type="expression patterns" value="Group enriched (brain, skin)"/>
</dbReference>
<dbReference type="MalaCards" id="CACNB4"/>
<dbReference type="MIM" id="601949">
    <property type="type" value="gene"/>
</dbReference>
<dbReference type="MIM" id="607682">
    <property type="type" value="phenotype"/>
</dbReference>
<dbReference type="MIM" id="613855">
    <property type="type" value="phenotype"/>
</dbReference>
<dbReference type="neXtProt" id="NX_O00305"/>
<dbReference type="OpenTargets" id="ENSG00000182389"/>
<dbReference type="Orphanet" id="211067">
    <property type="disease" value="Episodic ataxia type 5"/>
</dbReference>
<dbReference type="Orphanet" id="307">
    <property type="disease" value="Juvenile myoclonic epilepsy"/>
</dbReference>
<dbReference type="PharmGKB" id="PA26014"/>
<dbReference type="VEuPathDB" id="HostDB:ENSG00000182389"/>
<dbReference type="eggNOG" id="KOG3812">
    <property type="taxonomic scope" value="Eukaryota"/>
</dbReference>
<dbReference type="GeneTree" id="ENSGT00950000182837"/>
<dbReference type="HOGENOM" id="CLU_021995_0_1_1"/>
<dbReference type="InParanoid" id="O00305"/>
<dbReference type="OMA" id="WRSTHAS"/>
<dbReference type="OrthoDB" id="5962384at2759"/>
<dbReference type="PAN-GO" id="O00305">
    <property type="GO annotations" value="4 GO annotations based on evolutionary models"/>
</dbReference>
<dbReference type="PhylomeDB" id="O00305"/>
<dbReference type="TreeFam" id="TF316195"/>
<dbReference type="PathwayCommons" id="O00305"/>
<dbReference type="Reactome" id="R-HSA-112308">
    <property type="pathway name" value="Presynaptic depolarization and calcium channel opening"/>
</dbReference>
<dbReference type="Reactome" id="R-HSA-419037">
    <property type="pathway name" value="NCAM1 interactions"/>
</dbReference>
<dbReference type="SignaLink" id="O00305"/>
<dbReference type="BioGRID-ORCS" id="785">
    <property type="hits" value="14 hits in 1157 CRISPR screens"/>
</dbReference>
<dbReference type="CD-CODE" id="FB4E32DD">
    <property type="entry name" value="Presynaptic clusters and postsynaptic densities"/>
</dbReference>
<dbReference type="ChiTaRS" id="CACNB4">
    <property type="organism name" value="human"/>
</dbReference>
<dbReference type="EvolutionaryTrace" id="O00305"/>
<dbReference type="GeneWiki" id="CACNB4"/>
<dbReference type="GenomeRNAi" id="785"/>
<dbReference type="Pharos" id="O00305">
    <property type="development level" value="Tbio"/>
</dbReference>
<dbReference type="PRO" id="PR:O00305"/>
<dbReference type="Proteomes" id="UP000005640">
    <property type="component" value="Chromosome 2"/>
</dbReference>
<dbReference type="RNAct" id="O00305">
    <property type="molecule type" value="protein"/>
</dbReference>
<dbReference type="Bgee" id="ENSG00000182389">
    <property type="expression patterns" value="Expressed in cerebellar vermis and 147 other cell types or tissues"/>
</dbReference>
<dbReference type="ExpressionAtlas" id="O00305">
    <property type="expression patterns" value="baseline and differential"/>
</dbReference>
<dbReference type="GO" id="GO:0009898">
    <property type="term" value="C:cytoplasmic side of plasma membrane"/>
    <property type="evidence" value="ECO:0000304"/>
    <property type="project" value="UniProtKB"/>
</dbReference>
<dbReference type="GO" id="GO:0005829">
    <property type="term" value="C:cytosol"/>
    <property type="evidence" value="ECO:0000304"/>
    <property type="project" value="Reactome"/>
</dbReference>
<dbReference type="GO" id="GO:0098978">
    <property type="term" value="C:glutamatergic synapse"/>
    <property type="evidence" value="ECO:0007669"/>
    <property type="project" value="Ensembl"/>
</dbReference>
<dbReference type="GO" id="GO:0016607">
    <property type="term" value="C:nuclear speck"/>
    <property type="evidence" value="ECO:0007669"/>
    <property type="project" value="Ensembl"/>
</dbReference>
<dbReference type="GO" id="GO:0005886">
    <property type="term" value="C:plasma membrane"/>
    <property type="evidence" value="ECO:0000314"/>
    <property type="project" value="UniProtKB"/>
</dbReference>
<dbReference type="GO" id="GO:0098793">
    <property type="term" value="C:presynapse"/>
    <property type="evidence" value="ECO:0007669"/>
    <property type="project" value="Ensembl"/>
</dbReference>
<dbReference type="GO" id="GO:0045202">
    <property type="term" value="C:synapse"/>
    <property type="evidence" value="ECO:0000314"/>
    <property type="project" value="UniProtKB"/>
</dbReference>
<dbReference type="GO" id="GO:0005891">
    <property type="term" value="C:voltage-gated calcium channel complex"/>
    <property type="evidence" value="ECO:0000314"/>
    <property type="project" value="UniProtKB"/>
</dbReference>
<dbReference type="GO" id="GO:0019901">
    <property type="term" value="F:protein kinase binding"/>
    <property type="evidence" value="ECO:0007669"/>
    <property type="project" value="Ensembl"/>
</dbReference>
<dbReference type="GO" id="GO:0099626">
    <property type="term" value="F:voltage-gated calcium channel activity involved in regulation of presynaptic cytosolic calcium levels"/>
    <property type="evidence" value="ECO:0007669"/>
    <property type="project" value="Ensembl"/>
</dbReference>
<dbReference type="GO" id="GO:0007628">
    <property type="term" value="P:adult walking behavior"/>
    <property type="evidence" value="ECO:0007669"/>
    <property type="project" value="Ensembl"/>
</dbReference>
<dbReference type="GO" id="GO:0006816">
    <property type="term" value="P:calcium ion transport"/>
    <property type="evidence" value="ECO:0000318"/>
    <property type="project" value="GO_Central"/>
</dbReference>
<dbReference type="GO" id="GO:0046058">
    <property type="term" value="P:cAMP metabolic process"/>
    <property type="evidence" value="ECO:0007669"/>
    <property type="project" value="Ensembl"/>
</dbReference>
<dbReference type="GO" id="GO:1990830">
    <property type="term" value="P:cellular response to leukemia inhibitory factor"/>
    <property type="evidence" value="ECO:0007669"/>
    <property type="project" value="Ensembl"/>
</dbReference>
<dbReference type="GO" id="GO:0007268">
    <property type="term" value="P:chemical synaptic transmission"/>
    <property type="evidence" value="ECO:0000318"/>
    <property type="project" value="GO_Central"/>
</dbReference>
<dbReference type="GO" id="GO:0050908">
    <property type="term" value="P:detection of light stimulus involved in visual perception"/>
    <property type="evidence" value="ECO:0007669"/>
    <property type="project" value="Ensembl"/>
</dbReference>
<dbReference type="GO" id="GO:0014051">
    <property type="term" value="P:gamma-aminobutyric acid secretion"/>
    <property type="evidence" value="ECO:0007669"/>
    <property type="project" value="Ensembl"/>
</dbReference>
<dbReference type="GO" id="GO:0007214">
    <property type="term" value="P:gamma-aminobutyric acid signaling pathway"/>
    <property type="evidence" value="ECO:0007669"/>
    <property type="project" value="Ensembl"/>
</dbReference>
<dbReference type="GO" id="GO:0055001">
    <property type="term" value="P:muscle cell development"/>
    <property type="evidence" value="ECO:0007669"/>
    <property type="project" value="Ensembl"/>
</dbReference>
<dbReference type="GO" id="GO:0008285">
    <property type="term" value="P:negative regulation of cell population proliferation"/>
    <property type="evidence" value="ECO:0007669"/>
    <property type="project" value="Ensembl"/>
</dbReference>
<dbReference type="GO" id="GO:2000134">
    <property type="term" value="P:negative regulation of G1/S transition of mitotic cell cycle"/>
    <property type="evidence" value="ECO:0007669"/>
    <property type="project" value="Ensembl"/>
</dbReference>
<dbReference type="GO" id="GO:0007528">
    <property type="term" value="P:neuromuscular junction development"/>
    <property type="evidence" value="ECO:0007669"/>
    <property type="project" value="Ensembl"/>
</dbReference>
<dbReference type="GO" id="GO:0019227">
    <property type="term" value="P:neuronal action potential propagation"/>
    <property type="evidence" value="ECO:0007669"/>
    <property type="project" value="Ensembl"/>
</dbReference>
<dbReference type="GO" id="GO:0048541">
    <property type="term" value="P:Peyer's patch development"/>
    <property type="evidence" value="ECO:0007669"/>
    <property type="project" value="Ensembl"/>
</dbReference>
<dbReference type="GO" id="GO:1904751">
    <property type="term" value="P:positive regulation of protein localization to nucleolus"/>
    <property type="evidence" value="ECO:0007669"/>
    <property type="project" value="Ensembl"/>
</dbReference>
<dbReference type="GO" id="GO:2000300">
    <property type="term" value="P:regulation of synaptic vesicle exocytosis"/>
    <property type="evidence" value="ECO:0007669"/>
    <property type="project" value="Ensembl"/>
</dbReference>
<dbReference type="GO" id="GO:1901385">
    <property type="term" value="P:regulation of voltage-gated calcium channel activity"/>
    <property type="evidence" value="ECO:0000315"/>
    <property type="project" value="UniProtKB"/>
</dbReference>
<dbReference type="GO" id="GO:0048536">
    <property type="term" value="P:spleen development"/>
    <property type="evidence" value="ECO:0007669"/>
    <property type="project" value="Ensembl"/>
</dbReference>
<dbReference type="GO" id="GO:0035249">
    <property type="term" value="P:synaptic transmission, glutamatergic"/>
    <property type="evidence" value="ECO:0007669"/>
    <property type="project" value="Ensembl"/>
</dbReference>
<dbReference type="GO" id="GO:0050852">
    <property type="term" value="P:T cell receptor signaling pathway"/>
    <property type="evidence" value="ECO:0007669"/>
    <property type="project" value="Ensembl"/>
</dbReference>
<dbReference type="GO" id="GO:0048538">
    <property type="term" value="P:thymus development"/>
    <property type="evidence" value="ECO:0007669"/>
    <property type="project" value="Ensembl"/>
</dbReference>
<dbReference type="CDD" id="cd12043">
    <property type="entry name" value="SH3_CACNB4"/>
    <property type="match status" value="1"/>
</dbReference>
<dbReference type="FunFam" id="3.40.50.300:FF:000432">
    <property type="entry name" value="Voltage-dependent L-type calcium channel subunit beta-1 isoform 1"/>
    <property type="match status" value="1"/>
</dbReference>
<dbReference type="FunFam" id="2.30.30.40:FF:000015">
    <property type="entry name" value="Voltage-dependent L-type calcium channel subunit beta-2"/>
    <property type="match status" value="1"/>
</dbReference>
<dbReference type="Gene3D" id="3.40.50.300">
    <property type="entry name" value="P-loop containing nucleotide triphosphate hydrolases"/>
    <property type="match status" value="1"/>
</dbReference>
<dbReference type="Gene3D" id="2.30.30.40">
    <property type="entry name" value="SH3 Domains"/>
    <property type="match status" value="1"/>
</dbReference>
<dbReference type="InterPro" id="IPR046937">
    <property type="entry name" value="CAB1-4_N_A-dom"/>
</dbReference>
<dbReference type="InterPro" id="IPR008145">
    <property type="entry name" value="GK/Ca_channel_bsu"/>
</dbReference>
<dbReference type="InterPro" id="IPR027417">
    <property type="entry name" value="P-loop_NTPase"/>
</dbReference>
<dbReference type="InterPro" id="IPR036028">
    <property type="entry name" value="SH3-like_dom_sf"/>
</dbReference>
<dbReference type="InterPro" id="IPR001452">
    <property type="entry name" value="SH3_domain"/>
</dbReference>
<dbReference type="InterPro" id="IPR000584">
    <property type="entry name" value="VDCC_L_bsu"/>
</dbReference>
<dbReference type="PANTHER" id="PTHR11824">
    <property type="entry name" value="VOLTAGE-DEPENDENT CALCIUM CHANNEL BETA SUBUNIT"/>
    <property type="match status" value="1"/>
</dbReference>
<dbReference type="Pfam" id="PF00625">
    <property type="entry name" value="Guanylate_kin"/>
    <property type="match status" value="1"/>
</dbReference>
<dbReference type="Pfam" id="PF12052">
    <property type="entry name" value="VGCC_beta4Aa_N"/>
    <property type="match status" value="1"/>
</dbReference>
<dbReference type="PRINTS" id="PR01626">
    <property type="entry name" value="LCACHANNELB"/>
</dbReference>
<dbReference type="SMART" id="SM00072">
    <property type="entry name" value="GuKc"/>
    <property type="match status" value="1"/>
</dbReference>
<dbReference type="SUPFAM" id="SSF52540">
    <property type="entry name" value="P-loop containing nucleoside triphosphate hydrolases"/>
    <property type="match status" value="1"/>
</dbReference>
<dbReference type="SUPFAM" id="SSF50044">
    <property type="entry name" value="SH3-domain"/>
    <property type="match status" value="1"/>
</dbReference>
<dbReference type="PROSITE" id="PS50002">
    <property type="entry name" value="SH3"/>
    <property type="match status" value="1"/>
</dbReference>
<reference key="1">
    <citation type="journal article" date="1997" name="Hum. Genet.">
        <title>Assignment of human genes for beta 2 and beta 4 subunits of voltage-dependent Ca2+ channels to chromosomes 10p12 and 2q22-q23.</title>
        <authorList>
            <person name="Taviaux S."/>
            <person name="Williams M.E."/>
            <person name="Harpold M.M."/>
            <person name="Nargeot J."/>
            <person name="Lory P."/>
        </authorList>
    </citation>
    <scope>NUCLEOTIDE SEQUENCE [MRNA] (ISOFORM 1)</scope>
    <source>
        <tissue>Brain</tissue>
    </source>
</reference>
<reference key="2">
    <citation type="journal article" date="2002" name="J. Neurosci.">
        <title>Alternative splicing of the beta 4 subunit has alpha 1 subunit subtype-specific effects on Ca2+ channel gating.</title>
        <authorList>
            <person name="Helton T.D."/>
            <person name="Horne W.A."/>
        </authorList>
    </citation>
    <scope>NUCLEOTIDE SEQUENCE [MRNA] (ISOFORM 2)</scope>
    <scope>ALTERNATIVE SPLICING</scope>
    <scope>FUNCTION</scope>
    <scope>SUBUNIT</scope>
    <source>
        <tissue>Spinal cord</tissue>
    </source>
</reference>
<reference key="3">
    <citation type="journal article" date="2007" name="Biochem. Biophys. Res. Commun.">
        <title>The GK domain of the voltage-dependent calcium channel beta subunit is essential for binding to the alpha subunit.</title>
        <authorList>
            <person name="Kobayashi T."/>
            <person name="Yamada Y."/>
            <person name="Fukao M."/>
            <person name="Shiratori K."/>
            <person name="Tsutsuura M."/>
            <person name="Tanimoto K."/>
            <person name="Tohse N."/>
        </authorList>
    </citation>
    <scope>NUCLEOTIDE SEQUENCE [MRNA] (ISOFORM 4)</scope>
    <source>
        <tissue>Brain</tissue>
    </source>
</reference>
<reference key="4">
    <citation type="journal article" date="2004" name="Nat. Genet.">
        <title>Complete sequencing and characterization of 21,243 full-length human cDNAs.</title>
        <authorList>
            <person name="Ota T."/>
            <person name="Suzuki Y."/>
            <person name="Nishikawa T."/>
            <person name="Otsuki T."/>
            <person name="Sugiyama T."/>
            <person name="Irie R."/>
            <person name="Wakamatsu A."/>
            <person name="Hayashi K."/>
            <person name="Sato H."/>
            <person name="Nagai K."/>
            <person name="Kimura K."/>
            <person name="Makita H."/>
            <person name="Sekine M."/>
            <person name="Obayashi M."/>
            <person name="Nishi T."/>
            <person name="Shibahara T."/>
            <person name="Tanaka T."/>
            <person name="Ishii S."/>
            <person name="Yamamoto J."/>
            <person name="Saito K."/>
            <person name="Kawai Y."/>
            <person name="Isono Y."/>
            <person name="Nakamura Y."/>
            <person name="Nagahari K."/>
            <person name="Murakami K."/>
            <person name="Yasuda T."/>
            <person name="Iwayanagi T."/>
            <person name="Wagatsuma M."/>
            <person name="Shiratori A."/>
            <person name="Sudo H."/>
            <person name="Hosoiri T."/>
            <person name="Kaku Y."/>
            <person name="Kodaira H."/>
            <person name="Kondo H."/>
            <person name="Sugawara M."/>
            <person name="Takahashi M."/>
            <person name="Kanda K."/>
            <person name="Yokoi T."/>
            <person name="Furuya T."/>
            <person name="Kikkawa E."/>
            <person name="Omura Y."/>
            <person name="Abe K."/>
            <person name="Kamihara K."/>
            <person name="Katsuta N."/>
            <person name="Sato K."/>
            <person name="Tanikawa M."/>
            <person name="Yamazaki M."/>
            <person name="Ninomiya K."/>
            <person name="Ishibashi T."/>
            <person name="Yamashita H."/>
            <person name="Murakawa K."/>
            <person name="Fujimori K."/>
            <person name="Tanai H."/>
            <person name="Kimata M."/>
            <person name="Watanabe M."/>
            <person name="Hiraoka S."/>
            <person name="Chiba Y."/>
            <person name="Ishida S."/>
            <person name="Ono Y."/>
            <person name="Takiguchi S."/>
            <person name="Watanabe S."/>
            <person name="Yosida M."/>
            <person name="Hotuta T."/>
            <person name="Kusano J."/>
            <person name="Kanehori K."/>
            <person name="Takahashi-Fujii A."/>
            <person name="Hara H."/>
            <person name="Tanase T.-O."/>
            <person name="Nomura Y."/>
            <person name="Togiya S."/>
            <person name="Komai F."/>
            <person name="Hara R."/>
            <person name="Takeuchi K."/>
            <person name="Arita M."/>
            <person name="Imose N."/>
            <person name="Musashino K."/>
            <person name="Yuuki H."/>
            <person name="Oshima A."/>
            <person name="Sasaki N."/>
            <person name="Aotsuka S."/>
            <person name="Yoshikawa Y."/>
            <person name="Matsunawa H."/>
            <person name="Ichihara T."/>
            <person name="Shiohata N."/>
            <person name="Sano S."/>
            <person name="Moriya S."/>
            <person name="Momiyama H."/>
            <person name="Satoh N."/>
            <person name="Takami S."/>
            <person name="Terashima Y."/>
            <person name="Suzuki O."/>
            <person name="Nakagawa S."/>
            <person name="Senoh A."/>
            <person name="Mizoguchi H."/>
            <person name="Goto Y."/>
            <person name="Shimizu F."/>
            <person name="Wakebe H."/>
            <person name="Hishigaki H."/>
            <person name="Watanabe T."/>
            <person name="Sugiyama A."/>
            <person name="Takemoto M."/>
            <person name="Kawakami B."/>
            <person name="Yamazaki M."/>
            <person name="Watanabe K."/>
            <person name="Kumagai A."/>
            <person name="Itakura S."/>
            <person name="Fukuzumi Y."/>
            <person name="Fujimori Y."/>
            <person name="Komiyama M."/>
            <person name="Tashiro H."/>
            <person name="Tanigami A."/>
            <person name="Fujiwara T."/>
            <person name="Ono T."/>
            <person name="Yamada K."/>
            <person name="Fujii Y."/>
            <person name="Ozaki K."/>
            <person name="Hirao M."/>
            <person name="Ohmori Y."/>
            <person name="Kawabata A."/>
            <person name="Hikiji T."/>
            <person name="Kobatake N."/>
            <person name="Inagaki H."/>
            <person name="Ikema Y."/>
            <person name="Okamoto S."/>
            <person name="Okitani R."/>
            <person name="Kawakami T."/>
            <person name="Noguchi S."/>
            <person name="Itoh T."/>
            <person name="Shigeta K."/>
            <person name="Senba T."/>
            <person name="Matsumura K."/>
            <person name="Nakajima Y."/>
            <person name="Mizuno T."/>
            <person name="Morinaga M."/>
            <person name="Sasaki M."/>
            <person name="Togashi T."/>
            <person name="Oyama M."/>
            <person name="Hata H."/>
            <person name="Watanabe M."/>
            <person name="Komatsu T."/>
            <person name="Mizushima-Sugano J."/>
            <person name="Satoh T."/>
            <person name="Shirai Y."/>
            <person name="Takahashi Y."/>
            <person name="Nakagawa K."/>
            <person name="Okumura K."/>
            <person name="Nagase T."/>
            <person name="Nomura N."/>
            <person name="Kikuchi H."/>
            <person name="Masuho Y."/>
            <person name="Yamashita R."/>
            <person name="Nakai K."/>
            <person name="Yada T."/>
            <person name="Nakamura Y."/>
            <person name="Ohara O."/>
            <person name="Isogai T."/>
            <person name="Sugano S."/>
        </authorList>
    </citation>
    <scope>NUCLEOTIDE SEQUENCE [LARGE SCALE MRNA] (ISOFORMS 2 AND 3)</scope>
    <source>
        <tissue>Amygdala</tissue>
        <tissue>Hippocampus</tissue>
    </source>
</reference>
<reference key="5">
    <citation type="journal article" date="2005" name="Nature">
        <title>Generation and annotation of the DNA sequences of human chromosomes 2 and 4.</title>
        <authorList>
            <person name="Hillier L.W."/>
            <person name="Graves T.A."/>
            <person name="Fulton R.S."/>
            <person name="Fulton L.A."/>
            <person name="Pepin K.H."/>
            <person name="Minx P."/>
            <person name="Wagner-McPherson C."/>
            <person name="Layman D."/>
            <person name="Wylie K."/>
            <person name="Sekhon M."/>
            <person name="Becker M.C."/>
            <person name="Fewell G.A."/>
            <person name="Delehaunty K.D."/>
            <person name="Miner T.L."/>
            <person name="Nash W.E."/>
            <person name="Kremitzki C."/>
            <person name="Oddy L."/>
            <person name="Du H."/>
            <person name="Sun H."/>
            <person name="Bradshaw-Cordum H."/>
            <person name="Ali J."/>
            <person name="Carter J."/>
            <person name="Cordes M."/>
            <person name="Harris A."/>
            <person name="Isak A."/>
            <person name="van Brunt A."/>
            <person name="Nguyen C."/>
            <person name="Du F."/>
            <person name="Courtney L."/>
            <person name="Kalicki J."/>
            <person name="Ozersky P."/>
            <person name="Abbott S."/>
            <person name="Armstrong J."/>
            <person name="Belter E.A."/>
            <person name="Caruso L."/>
            <person name="Cedroni M."/>
            <person name="Cotton M."/>
            <person name="Davidson T."/>
            <person name="Desai A."/>
            <person name="Elliott G."/>
            <person name="Erb T."/>
            <person name="Fronick C."/>
            <person name="Gaige T."/>
            <person name="Haakenson W."/>
            <person name="Haglund K."/>
            <person name="Holmes A."/>
            <person name="Harkins R."/>
            <person name="Kim K."/>
            <person name="Kruchowski S.S."/>
            <person name="Strong C.M."/>
            <person name="Grewal N."/>
            <person name="Goyea E."/>
            <person name="Hou S."/>
            <person name="Levy A."/>
            <person name="Martinka S."/>
            <person name="Mead K."/>
            <person name="McLellan M.D."/>
            <person name="Meyer R."/>
            <person name="Randall-Maher J."/>
            <person name="Tomlinson C."/>
            <person name="Dauphin-Kohlberg S."/>
            <person name="Kozlowicz-Reilly A."/>
            <person name="Shah N."/>
            <person name="Swearengen-Shahid S."/>
            <person name="Snider J."/>
            <person name="Strong J.T."/>
            <person name="Thompson J."/>
            <person name="Yoakum M."/>
            <person name="Leonard S."/>
            <person name="Pearman C."/>
            <person name="Trani L."/>
            <person name="Radionenko M."/>
            <person name="Waligorski J.E."/>
            <person name="Wang C."/>
            <person name="Rock S.M."/>
            <person name="Tin-Wollam A.-M."/>
            <person name="Maupin R."/>
            <person name="Latreille P."/>
            <person name="Wendl M.C."/>
            <person name="Yang S.-P."/>
            <person name="Pohl C."/>
            <person name="Wallis J.W."/>
            <person name="Spieth J."/>
            <person name="Bieri T.A."/>
            <person name="Berkowicz N."/>
            <person name="Nelson J.O."/>
            <person name="Osborne J."/>
            <person name="Ding L."/>
            <person name="Meyer R."/>
            <person name="Sabo A."/>
            <person name="Shotland Y."/>
            <person name="Sinha P."/>
            <person name="Wohldmann P.E."/>
            <person name="Cook L.L."/>
            <person name="Hickenbotham M.T."/>
            <person name="Eldred J."/>
            <person name="Williams D."/>
            <person name="Jones T.A."/>
            <person name="She X."/>
            <person name="Ciccarelli F.D."/>
            <person name="Izaurralde E."/>
            <person name="Taylor J."/>
            <person name="Schmutz J."/>
            <person name="Myers R.M."/>
            <person name="Cox D.R."/>
            <person name="Huang X."/>
            <person name="McPherson J.D."/>
            <person name="Mardis E.R."/>
            <person name="Clifton S.W."/>
            <person name="Warren W.C."/>
            <person name="Chinwalla A.T."/>
            <person name="Eddy S.R."/>
            <person name="Marra M.A."/>
            <person name="Ovcharenko I."/>
            <person name="Furey T.S."/>
            <person name="Miller W."/>
            <person name="Eichler E.E."/>
            <person name="Bork P."/>
            <person name="Suyama M."/>
            <person name="Torrents D."/>
            <person name="Waterston R.H."/>
            <person name="Wilson R.K."/>
        </authorList>
    </citation>
    <scope>NUCLEOTIDE SEQUENCE [LARGE SCALE GENOMIC DNA]</scope>
</reference>
<reference key="6">
    <citation type="submission" date="2005-09" db="EMBL/GenBank/DDBJ databases">
        <authorList>
            <person name="Mural R.J."/>
            <person name="Istrail S."/>
            <person name="Sutton G."/>
            <person name="Florea L."/>
            <person name="Halpern A.L."/>
            <person name="Mobarry C.M."/>
            <person name="Lippert R."/>
            <person name="Walenz B."/>
            <person name="Shatkay H."/>
            <person name="Dew I."/>
            <person name="Miller J.R."/>
            <person name="Flanigan M.J."/>
            <person name="Edwards N.J."/>
            <person name="Bolanos R."/>
            <person name="Fasulo D."/>
            <person name="Halldorsson B.V."/>
            <person name="Hannenhalli S."/>
            <person name="Turner R."/>
            <person name="Yooseph S."/>
            <person name="Lu F."/>
            <person name="Nusskern D.R."/>
            <person name="Shue B.C."/>
            <person name="Zheng X.H."/>
            <person name="Zhong F."/>
            <person name="Delcher A.L."/>
            <person name="Huson D.H."/>
            <person name="Kravitz S.A."/>
            <person name="Mouchard L."/>
            <person name="Reinert K."/>
            <person name="Remington K.A."/>
            <person name="Clark A.G."/>
            <person name="Waterman M.S."/>
            <person name="Eichler E.E."/>
            <person name="Adams M.D."/>
            <person name="Hunkapiller M.W."/>
            <person name="Myers E.W."/>
            <person name="Venter J.C."/>
        </authorList>
    </citation>
    <scope>NUCLEOTIDE SEQUENCE [LARGE SCALE GENOMIC DNA]</scope>
</reference>
<reference key="7">
    <citation type="journal article" date="2004" name="Genome Res.">
        <title>The status, quality, and expansion of the NIH full-length cDNA project: the Mammalian Gene Collection (MGC).</title>
        <authorList>
            <consortium name="The MGC Project Team"/>
        </authorList>
    </citation>
    <scope>NUCLEOTIDE SEQUENCE [LARGE SCALE MRNA] (ISOFORM 1)</scope>
    <source>
        <tissue>Brain</tissue>
    </source>
</reference>
<reference key="8">
    <citation type="journal article" date="1998" name="Genomics">
        <title>Calcium channel beta4 (CACNB4): human ortholog of the mouse epilepsy gene lethargic.</title>
        <authorList>
            <person name="Escayg A."/>
            <person name="Jones J.M."/>
            <person name="Kearney J.A."/>
            <person name="Hitchcock P.F."/>
            <person name="Meisler M.H."/>
        </authorList>
    </citation>
    <scope>NUCLEOTIDE SEQUENCE [MRNA] OF 9-520 (ISOFORM 1)</scope>
</reference>
<reference key="9">
    <citation type="journal article" date="2000" name="Am. J. Hum. Genet.">
        <title>Coding and noncoding variation of the human calcium-channel beta4-subunit gene CACNB4 in patients with idiopathic generalized epilepsy and episodic ataxia.</title>
        <authorList>
            <person name="Escayg A."/>
            <person name="De Waard M."/>
            <person name="Lee D.D."/>
            <person name="Bichet D."/>
            <person name="Wolf P."/>
            <person name="Mayer T."/>
            <person name="Johnston J."/>
            <person name="Baloh R."/>
            <person name="Sander T."/>
            <person name="Meisler M.H."/>
        </authorList>
    </citation>
    <scope>INVOLVEMENT IN EJM6 AND EIG9</scope>
    <scope>VARIANT EA5 PHE-104</scope>
</reference>
<reference key="10">
    <citation type="journal article" date="2009" name="BMC Immunol.">
        <title>Identification of SH3 domain interaction partners of human FasL (CD178) by phage display screening.</title>
        <authorList>
            <person name="Voss M."/>
            <person name="Lettau M."/>
            <person name="Janssen O."/>
        </authorList>
    </citation>
    <scope>INTERACTION WITH FASLG</scope>
</reference>
<reference key="11">
    <citation type="journal article" date="2006" name="Protein Sci.">
        <title>Solution structure of the N-terminal A domain of the human voltage-gated Ca2+channel beta4a subunit.</title>
        <authorList>
            <person name="Vendel A.C."/>
            <person name="Rithner C.D."/>
            <person name="Lyons B.A."/>
            <person name="Horne W.A."/>
        </authorList>
    </citation>
    <scope>STRUCTURE BY NMR OF 50-92</scope>
</reference>
<protein>
    <recommendedName>
        <fullName evidence="11">Voltage-dependent L-type calcium channel subunit beta-4</fullName>
        <shortName evidence="11">CAB4</shortName>
    </recommendedName>
    <alternativeName>
        <fullName evidence="11">Calcium channel voltage-dependent subunit beta 4</fullName>
    </alternativeName>
</protein>
<organism>
    <name type="scientific">Homo sapiens</name>
    <name type="common">Human</name>
    <dbReference type="NCBI Taxonomy" id="9606"/>
    <lineage>
        <taxon>Eukaryota</taxon>
        <taxon>Metazoa</taxon>
        <taxon>Chordata</taxon>
        <taxon>Craniata</taxon>
        <taxon>Vertebrata</taxon>
        <taxon>Euteleostomi</taxon>
        <taxon>Mammalia</taxon>
        <taxon>Eutheria</taxon>
        <taxon>Euarchontoglires</taxon>
        <taxon>Primates</taxon>
        <taxon>Haplorrhini</taxon>
        <taxon>Catarrhini</taxon>
        <taxon>Hominidae</taxon>
        <taxon>Homo</taxon>
    </lineage>
</organism>
<accession>O00305</accession>
<accession>A7BJ74</accession>
<accession>A8K1Y4</accession>
<accession>B4DG40</accession>
<accession>O60515</accession>
<accession>Q6B000</accession>
<accession>Q96L40</accession>
<proteinExistence type="evidence at protein level"/>
<evidence type="ECO:0000250" key="1">
    <source>
        <dbReference type="UniProtKB" id="D4A055"/>
    </source>
</evidence>
<evidence type="ECO:0000250" key="2">
    <source>
        <dbReference type="UniProtKB" id="Q8R0S4"/>
    </source>
</evidence>
<evidence type="ECO:0000255" key="3">
    <source>
        <dbReference type="PROSITE-ProRule" id="PRU00192"/>
    </source>
</evidence>
<evidence type="ECO:0000256" key="4">
    <source>
        <dbReference type="SAM" id="MobiDB-lite"/>
    </source>
</evidence>
<evidence type="ECO:0000269" key="5">
    <source>
    </source>
</evidence>
<evidence type="ECO:0000269" key="6">
    <source>
    </source>
</evidence>
<evidence type="ECO:0000269" key="7">
    <source>
    </source>
</evidence>
<evidence type="ECO:0000303" key="8">
    <source>
    </source>
</evidence>
<evidence type="ECO:0000303" key="9">
    <source>
    </source>
</evidence>
<evidence type="ECO:0000303" key="10">
    <source>
    </source>
</evidence>
<evidence type="ECO:0000305" key="11"/>
<evidence type="ECO:0000312" key="12">
    <source>
        <dbReference type="HGNC" id="HGNC:1404"/>
    </source>
</evidence>
<evidence type="ECO:0007829" key="13">
    <source>
        <dbReference type="PDB" id="2D46"/>
    </source>
</evidence>